<name>G37L1_BOVIN</name>
<dbReference type="EMBL" id="BC118418">
    <property type="protein sequence ID" value="AAI18419.1"/>
    <property type="molecule type" value="mRNA"/>
</dbReference>
<dbReference type="RefSeq" id="NP_001069367.1">
    <property type="nucleotide sequence ID" value="NM_001075899.2"/>
</dbReference>
<dbReference type="SMR" id="Q17QD8"/>
<dbReference type="FunCoup" id="Q17QD8">
    <property type="interactions" value="1192"/>
</dbReference>
<dbReference type="STRING" id="9913.ENSBTAP00000019957"/>
<dbReference type="GlyCosmos" id="Q17QD8">
    <property type="glycosylation" value="1 site, No reported glycans"/>
</dbReference>
<dbReference type="GlyGen" id="Q17QD8">
    <property type="glycosylation" value="1 site"/>
</dbReference>
<dbReference type="PaxDb" id="9913-ENSBTAP00000019957"/>
<dbReference type="GeneID" id="527572"/>
<dbReference type="KEGG" id="bta:527572"/>
<dbReference type="CTD" id="9283"/>
<dbReference type="eggNOG" id="KOG3656">
    <property type="taxonomic scope" value="Eukaryota"/>
</dbReference>
<dbReference type="HOGENOM" id="CLU_029119_0_0_1"/>
<dbReference type="InParanoid" id="Q17QD8"/>
<dbReference type="OrthoDB" id="8960080at2759"/>
<dbReference type="TreeFam" id="TF331292"/>
<dbReference type="Proteomes" id="UP000009136">
    <property type="component" value="Unplaced"/>
</dbReference>
<dbReference type="GO" id="GO:0060170">
    <property type="term" value="C:ciliary membrane"/>
    <property type="evidence" value="ECO:0007669"/>
    <property type="project" value="UniProtKB-SubCell"/>
</dbReference>
<dbReference type="GO" id="GO:0005886">
    <property type="term" value="C:plasma membrane"/>
    <property type="evidence" value="ECO:0000318"/>
    <property type="project" value="GO_Central"/>
</dbReference>
<dbReference type="GO" id="GO:0043235">
    <property type="term" value="C:receptor complex"/>
    <property type="evidence" value="ECO:0000318"/>
    <property type="project" value="GO_Central"/>
</dbReference>
<dbReference type="GO" id="GO:0008528">
    <property type="term" value="F:G protein-coupled peptide receptor activity"/>
    <property type="evidence" value="ECO:0000318"/>
    <property type="project" value="GO_Central"/>
</dbReference>
<dbReference type="GO" id="GO:0004930">
    <property type="term" value="F:G protein-coupled receptor activity"/>
    <property type="evidence" value="ECO:0000250"/>
    <property type="project" value="UniProtKB"/>
</dbReference>
<dbReference type="GO" id="GO:0007193">
    <property type="term" value="P:adenylate cyclase-inhibiting G protein-coupled receptor signaling pathway"/>
    <property type="evidence" value="ECO:0000318"/>
    <property type="project" value="GO_Central"/>
</dbReference>
<dbReference type="GO" id="GO:0003085">
    <property type="term" value="P:negative regulation of systemic arterial blood pressure"/>
    <property type="evidence" value="ECO:0000250"/>
    <property type="project" value="UniProtKB"/>
</dbReference>
<dbReference type="GO" id="GO:0043410">
    <property type="term" value="P:positive regulation of MAPK cascade"/>
    <property type="evidence" value="ECO:0000318"/>
    <property type="project" value="GO_Central"/>
</dbReference>
<dbReference type="FunFam" id="1.20.1070.10:FF:000059">
    <property type="entry name" value="G protein-coupled receptor 37"/>
    <property type="match status" value="1"/>
</dbReference>
<dbReference type="Gene3D" id="1.20.1070.10">
    <property type="entry name" value="Rhodopsin 7-helix transmembrane proteins"/>
    <property type="match status" value="1"/>
</dbReference>
<dbReference type="InterPro" id="IPR000276">
    <property type="entry name" value="GPCR_Rhodpsn"/>
</dbReference>
<dbReference type="InterPro" id="IPR017452">
    <property type="entry name" value="GPCR_Rhodpsn_7TM"/>
</dbReference>
<dbReference type="InterPro" id="IPR003909">
    <property type="entry name" value="GPR37_orph"/>
</dbReference>
<dbReference type="PANTHER" id="PTHR46216:SF4">
    <property type="entry name" value="G-PROTEIN COUPLED RECEPTOR 37-LIKE 1"/>
    <property type="match status" value="1"/>
</dbReference>
<dbReference type="PANTHER" id="PTHR46216">
    <property type="entry name" value="PROSAPOSIN RECEPTOR GPR37 FAMILY MEMBER"/>
    <property type="match status" value="1"/>
</dbReference>
<dbReference type="Pfam" id="PF00001">
    <property type="entry name" value="7tm_1"/>
    <property type="match status" value="1"/>
</dbReference>
<dbReference type="PRINTS" id="PR00237">
    <property type="entry name" value="GPCRRHODOPSN"/>
</dbReference>
<dbReference type="PRINTS" id="PR01421">
    <property type="entry name" value="GPR37ORPHANR"/>
</dbReference>
<dbReference type="SUPFAM" id="SSF81321">
    <property type="entry name" value="Family A G protein-coupled receptor-like"/>
    <property type="match status" value="1"/>
</dbReference>
<dbReference type="PROSITE" id="PS50262">
    <property type="entry name" value="G_PROTEIN_RECEP_F1_2"/>
    <property type="match status" value="1"/>
</dbReference>
<evidence type="ECO:0000250" key="1">
    <source>
        <dbReference type="UniProtKB" id="O60883"/>
    </source>
</evidence>
<evidence type="ECO:0000250" key="2">
    <source>
        <dbReference type="UniProtKB" id="Q99JG2"/>
    </source>
</evidence>
<evidence type="ECO:0000255" key="3"/>
<evidence type="ECO:0000255" key="4">
    <source>
        <dbReference type="PROSITE-ProRule" id="PRU00521"/>
    </source>
</evidence>
<evidence type="ECO:0000256" key="5">
    <source>
        <dbReference type="SAM" id="MobiDB-lite"/>
    </source>
</evidence>
<feature type="signal peptide" evidence="3">
    <location>
        <begin position="1"/>
        <end position="25"/>
    </location>
</feature>
<feature type="chain" id="PRO_0000307928" description="G-protein coupled receptor 37-like 1">
    <location>
        <begin position="26"/>
        <end position="482"/>
    </location>
</feature>
<feature type="topological domain" description="Extracellular" evidence="3">
    <location>
        <begin position="26"/>
        <end position="134"/>
    </location>
</feature>
<feature type="transmembrane region" description="Helical; Name=1" evidence="3">
    <location>
        <begin position="135"/>
        <end position="155"/>
    </location>
</feature>
<feature type="topological domain" description="Cytoplasmic" evidence="3">
    <location>
        <begin position="156"/>
        <end position="167"/>
    </location>
</feature>
<feature type="transmembrane region" description="Helical; Name=2" evidence="3">
    <location>
        <begin position="168"/>
        <end position="188"/>
    </location>
</feature>
<feature type="topological domain" description="Extracellular" evidence="3">
    <location>
        <begin position="189"/>
        <end position="205"/>
    </location>
</feature>
<feature type="transmembrane region" description="Helical; Name=3" evidence="3">
    <location>
        <begin position="206"/>
        <end position="226"/>
    </location>
</feature>
<feature type="topological domain" description="Cytoplasmic" evidence="3">
    <location>
        <begin position="227"/>
        <end position="251"/>
    </location>
</feature>
<feature type="transmembrane region" description="Helical; Name=4" evidence="3">
    <location>
        <begin position="252"/>
        <end position="272"/>
    </location>
</feature>
<feature type="topological domain" description="Extracellular" evidence="3">
    <location>
        <begin position="273"/>
        <end position="310"/>
    </location>
</feature>
<feature type="transmembrane region" description="Helical; Name=5" evidence="3">
    <location>
        <begin position="311"/>
        <end position="331"/>
    </location>
</feature>
<feature type="topological domain" description="Cytoplasmic" evidence="3">
    <location>
        <begin position="332"/>
        <end position="361"/>
    </location>
</feature>
<feature type="transmembrane region" description="Helical; Name=6" evidence="3">
    <location>
        <begin position="362"/>
        <end position="382"/>
    </location>
</feature>
<feature type="topological domain" description="Extracellular" evidence="3">
    <location>
        <begin position="383"/>
        <end position="398"/>
    </location>
</feature>
<feature type="transmembrane region" description="Helical; Name=7" evidence="3">
    <location>
        <begin position="399"/>
        <end position="419"/>
    </location>
</feature>
<feature type="topological domain" description="Cytoplasmic" evidence="3">
    <location>
        <begin position="420"/>
        <end position="482"/>
    </location>
</feature>
<feature type="region of interest" description="Disordered" evidence="5">
    <location>
        <begin position="25"/>
        <end position="56"/>
    </location>
</feature>
<feature type="region of interest" description="Disordered" evidence="5">
    <location>
        <begin position="78"/>
        <end position="119"/>
    </location>
</feature>
<feature type="region of interest" description="Disordered" evidence="5">
    <location>
        <begin position="338"/>
        <end position="358"/>
    </location>
</feature>
<feature type="compositionally biased region" description="Basic and acidic residues" evidence="5">
    <location>
        <begin position="40"/>
        <end position="54"/>
    </location>
</feature>
<feature type="modified residue" description="Phosphothreonine" evidence="2">
    <location>
        <position position="480"/>
    </location>
</feature>
<feature type="glycosylation site" description="N-linked (GlcNAc...) asparagine" evidence="3">
    <location>
        <position position="105"/>
    </location>
</feature>
<feature type="disulfide bond" evidence="4">
    <location>
        <begin position="203"/>
        <end position="286"/>
    </location>
</feature>
<protein>
    <recommendedName>
        <fullName>G-protein coupled receptor 37-like 1</fullName>
    </recommendedName>
    <alternativeName>
        <fullName>Endothelin B receptor-like protein 2</fullName>
        <shortName>ETBR-LP-2</shortName>
    </alternativeName>
</protein>
<reference key="1">
    <citation type="submission" date="2006-06" db="EMBL/GenBank/DDBJ databases">
        <authorList>
            <consortium name="NIH - Mammalian Gene Collection (MGC) project"/>
        </authorList>
    </citation>
    <scope>NUCLEOTIDE SEQUENCE [LARGE SCALE MRNA]</scope>
    <source>
        <strain>Hereford</strain>
        <tissue>Fetal pons</tissue>
    </source>
</reference>
<gene>
    <name type="primary">GPR37L1</name>
    <name type="synonym">ETBRLP2</name>
</gene>
<comment type="function">
    <text evidence="1 2">G-protein coupled receptor (By similarity). Has been shown to bind the neuroprotective and glioprotective factor prosaposin (PSAP), leading to endocytosis followed by an ERK phosphorylation cascade (By similarity). However, other studies have shown that prosaposin does not increase activity (By similarity). It has been suggested that GPR37L1 is a constitutively active receptor which signals through the guanine nucleotide-binding protein G(s) subunit alpha (By similarity). Participates in the regulation of postnatal cerebellar development by modulating the Shh pathway (By similarity). Regulates baseline blood pressure in females and protects against cardiovascular stress in males (By similarity). Mediates inhibition of astrocyte glutamate transporters and reduction in neuronal N-methyl-D-aspartate receptor activity (By similarity).</text>
</comment>
<comment type="subunit">
    <text evidence="2">Interacts with the PTCH1 receptor.</text>
</comment>
<comment type="subcellular location">
    <subcellularLocation>
        <location evidence="1">Cell membrane</location>
        <topology evidence="3">Multi-pass membrane protein</topology>
    </subcellularLocation>
    <subcellularLocation>
        <location evidence="2">Cell projection</location>
        <location evidence="2">Cilium membrane</location>
        <topology evidence="3">Multi-pass membrane protein</topology>
    </subcellularLocation>
    <text evidence="2">Associates with the basal membrane of Bergmann glia cell primary cilia.</text>
</comment>
<comment type="domain">
    <text evidence="1">The N-terminal region is required for constitutive signal transduction.</text>
</comment>
<comment type="PTM">
    <text evidence="1">Undergoes metalloprotease-mediated cleavage which reduces its constitutive activity.</text>
</comment>
<comment type="PTM">
    <text evidence="1">Ubiquitinated.</text>
</comment>
<comment type="similarity">
    <text evidence="4">Belongs to the G-protein coupled receptor 1 family.</text>
</comment>
<comment type="caution">
    <text evidence="1">Has been reported to act as a receptor for prosaposin (PSAP). However, it has also been shown that prosaposin does not increase activity. It has been suggested that GPR37L1 is a constitutively active receptor.</text>
</comment>
<keyword id="KW-1003">Cell membrane</keyword>
<keyword id="KW-0966">Cell projection</keyword>
<keyword id="KW-1015">Disulfide bond</keyword>
<keyword id="KW-0297">G-protein coupled receptor</keyword>
<keyword id="KW-0325">Glycoprotein</keyword>
<keyword id="KW-0472">Membrane</keyword>
<keyword id="KW-0597">Phosphoprotein</keyword>
<keyword id="KW-0675">Receptor</keyword>
<keyword id="KW-1185">Reference proteome</keyword>
<keyword id="KW-0732">Signal</keyword>
<keyword id="KW-0807">Transducer</keyword>
<keyword id="KW-0812">Transmembrane</keyword>
<keyword id="KW-1133">Transmembrane helix</keyword>
<keyword id="KW-0832">Ubl conjugation</keyword>
<organism>
    <name type="scientific">Bos taurus</name>
    <name type="common">Bovine</name>
    <dbReference type="NCBI Taxonomy" id="9913"/>
    <lineage>
        <taxon>Eukaryota</taxon>
        <taxon>Metazoa</taxon>
        <taxon>Chordata</taxon>
        <taxon>Craniata</taxon>
        <taxon>Vertebrata</taxon>
        <taxon>Euteleostomi</taxon>
        <taxon>Mammalia</taxon>
        <taxon>Eutheria</taxon>
        <taxon>Laurasiatheria</taxon>
        <taxon>Artiodactyla</taxon>
        <taxon>Ruminantia</taxon>
        <taxon>Pecora</taxon>
        <taxon>Bovidae</taxon>
        <taxon>Bovinae</taxon>
        <taxon>Bos</taxon>
    </lineage>
</organism>
<sequence length="482" mass="51930">MRWLWPLGVSLAVALAAGPERAPRGVWLQQGGHQPVAQEQPDRSRRGAEREDAKGLQQYVPEGWAEYPRPIRPAALQPTQPWVAASPSPDRARATGGSGQEPQGNVTGPPGQRPQVQNPLYPVTERSYGAYAVLLLALLLFAVGIVGSLAVMCIVWHSYYLKSAWNSVLASLALWDFLVLFFCLPVVTFHEITKQRLLGAVSCRAVPFVEVSSLGVTTFSLCALGIDRFHVATSTLPKARPIEPCPSILAKLAVIWVGSMTLAAPELLLWQLVREPSPAAGTVDTCIMKPSAHLPESLYSLVLTYQNARMWWSFGCYFCLPVLFTVTCQLVTWRVRGTPGRKPESRPGPQEPRGARPSSTVAGLAAVHALCALPENVCNVVAAYLSAALTRQTLELLGLVTQFSTFFKAALTPLLLLCVSRPLGRAFLDCCCCCCGEGCGEGCGGRAAPAGPRAKLHTELSASGYFHKPREAPPLLALGTPC</sequence>
<proteinExistence type="evidence at transcript level"/>
<accession>Q17QD8</accession>